<gene>
    <name evidence="1" type="primary">rpsD</name>
    <name type="ordered locus">ECA4007</name>
</gene>
<keyword id="KW-1185">Reference proteome</keyword>
<keyword id="KW-0687">Ribonucleoprotein</keyword>
<keyword id="KW-0689">Ribosomal protein</keyword>
<keyword id="KW-0694">RNA-binding</keyword>
<keyword id="KW-0699">rRNA-binding</keyword>
<comment type="function">
    <text evidence="1">One of the primary rRNA binding proteins, it binds directly to 16S rRNA where it nucleates assembly of the body of the 30S subunit.</text>
</comment>
<comment type="function">
    <text evidence="1">With S5 and S12 plays an important role in translational accuracy.</text>
</comment>
<comment type="subunit">
    <text evidence="1">Part of the 30S ribosomal subunit. Contacts protein S5. The interaction surface between S4 and S5 is involved in control of translational fidelity.</text>
</comment>
<comment type="similarity">
    <text evidence="1">Belongs to the universal ribosomal protein uS4 family.</text>
</comment>
<name>RS4_PECAS</name>
<reference key="1">
    <citation type="journal article" date="2004" name="Proc. Natl. Acad. Sci. U.S.A.">
        <title>Genome sequence of the enterobacterial phytopathogen Erwinia carotovora subsp. atroseptica and characterization of virulence factors.</title>
        <authorList>
            <person name="Bell K.S."/>
            <person name="Sebaihia M."/>
            <person name="Pritchard L."/>
            <person name="Holden M.T.G."/>
            <person name="Hyman L.J."/>
            <person name="Holeva M.C."/>
            <person name="Thomson N.R."/>
            <person name="Bentley S.D."/>
            <person name="Churcher L.J.C."/>
            <person name="Mungall K."/>
            <person name="Atkin R."/>
            <person name="Bason N."/>
            <person name="Brooks K."/>
            <person name="Chillingworth T."/>
            <person name="Clark K."/>
            <person name="Doggett J."/>
            <person name="Fraser A."/>
            <person name="Hance Z."/>
            <person name="Hauser H."/>
            <person name="Jagels K."/>
            <person name="Moule S."/>
            <person name="Norbertczak H."/>
            <person name="Ormond D."/>
            <person name="Price C."/>
            <person name="Quail M.A."/>
            <person name="Sanders M."/>
            <person name="Walker D."/>
            <person name="Whitehead S."/>
            <person name="Salmond G.P.C."/>
            <person name="Birch P.R.J."/>
            <person name="Parkhill J."/>
            <person name="Toth I.K."/>
        </authorList>
    </citation>
    <scope>NUCLEOTIDE SEQUENCE [LARGE SCALE GENOMIC DNA]</scope>
    <source>
        <strain>SCRI 1043 / ATCC BAA-672</strain>
    </source>
</reference>
<evidence type="ECO:0000255" key="1">
    <source>
        <dbReference type="HAMAP-Rule" id="MF_01306"/>
    </source>
</evidence>
<evidence type="ECO:0000305" key="2"/>
<dbReference type="EMBL" id="BX950851">
    <property type="protein sequence ID" value="CAG76904.1"/>
    <property type="molecule type" value="Genomic_DNA"/>
</dbReference>
<dbReference type="RefSeq" id="WP_010286047.1">
    <property type="nucleotide sequence ID" value="NC_004547.2"/>
</dbReference>
<dbReference type="SMR" id="Q6CZZ4"/>
<dbReference type="STRING" id="218491.ECA4007"/>
<dbReference type="GeneID" id="93391956"/>
<dbReference type="KEGG" id="eca:ECA4007"/>
<dbReference type="eggNOG" id="COG0522">
    <property type="taxonomic scope" value="Bacteria"/>
</dbReference>
<dbReference type="HOGENOM" id="CLU_092403_0_2_6"/>
<dbReference type="OrthoDB" id="9803672at2"/>
<dbReference type="Proteomes" id="UP000007966">
    <property type="component" value="Chromosome"/>
</dbReference>
<dbReference type="GO" id="GO:0015935">
    <property type="term" value="C:small ribosomal subunit"/>
    <property type="evidence" value="ECO:0007669"/>
    <property type="project" value="InterPro"/>
</dbReference>
<dbReference type="GO" id="GO:0019843">
    <property type="term" value="F:rRNA binding"/>
    <property type="evidence" value="ECO:0007669"/>
    <property type="project" value="UniProtKB-UniRule"/>
</dbReference>
<dbReference type="GO" id="GO:0003735">
    <property type="term" value="F:structural constituent of ribosome"/>
    <property type="evidence" value="ECO:0007669"/>
    <property type="project" value="InterPro"/>
</dbReference>
<dbReference type="GO" id="GO:0042274">
    <property type="term" value="P:ribosomal small subunit biogenesis"/>
    <property type="evidence" value="ECO:0007669"/>
    <property type="project" value="TreeGrafter"/>
</dbReference>
<dbReference type="GO" id="GO:0006412">
    <property type="term" value="P:translation"/>
    <property type="evidence" value="ECO:0007669"/>
    <property type="project" value="UniProtKB-UniRule"/>
</dbReference>
<dbReference type="CDD" id="cd00165">
    <property type="entry name" value="S4"/>
    <property type="match status" value="1"/>
</dbReference>
<dbReference type="FunFam" id="1.10.1050.10:FF:000001">
    <property type="entry name" value="30S ribosomal protein S4"/>
    <property type="match status" value="1"/>
</dbReference>
<dbReference type="FunFam" id="3.10.290.10:FF:000001">
    <property type="entry name" value="30S ribosomal protein S4"/>
    <property type="match status" value="1"/>
</dbReference>
<dbReference type="Gene3D" id="1.10.1050.10">
    <property type="entry name" value="Ribosomal Protein S4 Delta 41, Chain A, domain 1"/>
    <property type="match status" value="1"/>
</dbReference>
<dbReference type="Gene3D" id="3.10.290.10">
    <property type="entry name" value="RNA-binding S4 domain"/>
    <property type="match status" value="1"/>
</dbReference>
<dbReference type="HAMAP" id="MF_01306_B">
    <property type="entry name" value="Ribosomal_uS4_B"/>
    <property type="match status" value="1"/>
</dbReference>
<dbReference type="InterPro" id="IPR022801">
    <property type="entry name" value="Ribosomal_uS4"/>
</dbReference>
<dbReference type="InterPro" id="IPR005709">
    <property type="entry name" value="Ribosomal_uS4_bac-type"/>
</dbReference>
<dbReference type="InterPro" id="IPR018079">
    <property type="entry name" value="Ribosomal_uS4_CS"/>
</dbReference>
<dbReference type="InterPro" id="IPR001912">
    <property type="entry name" value="Ribosomal_uS4_N"/>
</dbReference>
<dbReference type="InterPro" id="IPR002942">
    <property type="entry name" value="S4_RNA-bd"/>
</dbReference>
<dbReference type="InterPro" id="IPR036986">
    <property type="entry name" value="S4_RNA-bd_sf"/>
</dbReference>
<dbReference type="NCBIfam" id="NF003717">
    <property type="entry name" value="PRK05327.1"/>
    <property type="match status" value="1"/>
</dbReference>
<dbReference type="NCBIfam" id="TIGR01017">
    <property type="entry name" value="rpsD_bact"/>
    <property type="match status" value="1"/>
</dbReference>
<dbReference type="PANTHER" id="PTHR11831">
    <property type="entry name" value="30S 40S RIBOSOMAL PROTEIN"/>
    <property type="match status" value="1"/>
</dbReference>
<dbReference type="PANTHER" id="PTHR11831:SF4">
    <property type="entry name" value="SMALL RIBOSOMAL SUBUNIT PROTEIN US4M"/>
    <property type="match status" value="1"/>
</dbReference>
<dbReference type="Pfam" id="PF00163">
    <property type="entry name" value="Ribosomal_S4"/>
    <property type="match status" value="1"/>
</dbReference>
<dbReference type="Pfam" id="PF01479">
    <property type="entry name" value="S4"/>
    <property type="match status" value="1"/>
</dbReference>
<dbReference type="SMART" id="SM01390">
    <property type="entry name" value="Ribosomal_S4"/>
    <property type="match status" value="1"/>
</dbReference>
<dbReference type="SMART" id="SM00363">
    <property type="entry name" value="S4"/>
    <property type="match status" value="1"/>
</dbReference>
<dbReference type="SUPFAM" id="SSF55174">
    <property type="entry name" value="Alpha-L RNA-binding motif"/>
    <property type="match status" value="1"/>
</dbReference>
<dbReference type="PROSITE" id="PS00632">
    <property type="entry name" value="RIBOSOMAL_S4"/>
    <property type="match status" value="1"/>
</dbReference>
<dbReference type="PROSITE" id="PS50889">
    <property type="entry name" value="S4"/>
    <property type="match status" value="1"/>
</dbReference>
<organism>
    <name type="scientific">Pectobacterium atrosepticum (strain SCRI 1043 / ATCC BAA-672)</name>
    <name type="common">Erwinia carotovora subsp. atroseptica</name>
    <dbReference type="NCBI Taxonomy" id="218491"/>
    <lineage>
        <taxon>Bacteria</taxon>
        <taxon>Pseudomonadati</taxon>
        <taxon>Pseudomonadota</taxon>
        <taxon>Gammaproteobacteria</taxon>
        <taxon>Enterobacterales</taxon>
        <taxon>Pectobacteriaceae</taxon>
        <taxon>Pectobacterium</taxon>
    </lineage>
</organism>
<protein>
    <recommendedName>
        <fullName evidence="1">Small ribosomal subunit protein uS4</fullName>
    </recommendedName>
    <alternativeName>
        <fullName evidence="2">30S ribosomal protein S4</fullName>
    </alternativeName>
</protein>
<feature type="chain" id="PRO_0000132384" description="Small ribosomal subunit protein uS4">
    <location>
        <begin position="1"/>
        <end position="206"/>
    </location>
</feature>
<feature type="domain" description="S4 RNA-binding" evidence="1">
    <location>
        <begin position="96"/>
        <end position="156"/>
    </location>
</feature>
<accession>Q6CZZ4</accession>
<proteinExistence type="inferred from homology"/>
<sequence>MARYLGPKLKLSRREGTDLFLKSGVRAIDSKCKIEQAPGQHGARKPRLSDYGVQLREKQKVRRIYGVLERQFRNYYKEAARLKGNTGANLLQLLEGRLDNVVYRMGFGATRAEARQMVSHKAIMVNGRVVSIASYQVSPNDVVSIREKAKKQSRVKAALELAEQREKPTWLEVDAAKMEGVFKRIPERTDLSADINEHLIVELYSK</sequence>